<proteinExistence type="evidence at protein level"/>
<keyword id="KW-0007">Acetylation</keyword>
<keyword id="KW-0963">Cytoplasm</keyword>
<keyword id="KW-0903">Direct protein sequencing</keyword>
<keyword id="KW-0251">Elongation factor</keyword>
<keyword id="KW-0256">Endoplasmic reticulum</keyword>
<keyword id="KW-0385">Hypusine</keyword>
<keyword id="KW-0472">Membrane</keyword>
<keyword id="KW-0539">Nucleus</keyword>
<keyword id="KW-0648">Protein biosynthesis</keyword>
<keyword id="KW-1185">Reference proteome</keyword>
<keyword id="KW-0694">RNA-binding</keyword>
<organism>
    <name type="scientific">Gallus gallus</name>
    <name type="common">Chicken</name>
    <dbReference type="NCBI Taxonomy" id="9031"/>
    <lineage>
        <taxon>Eukaryota</taxon>
        <taxon>Metazoa</taxon>
        <taxon>Chordata</taxon>
        <taxon>Craniata</taxon>
        <taxon>Vertebrata</taxon>
        <taxon>Euteleostomi</taxon>
        <taxon>Archelosauria</taxon>
        <taxon>Archosauria</taxon>
        <taxon>Dinosauria</taxon>
        <taxon>Saurischia</taxon>
        <taxon>Theropoda</taxon>
        <taxon>Coelurosauria</taxon>
        <taxon>Aves</taxon>
        <taxon>Neognathae</taxon>
        <taxon>Galloanserae</taxon>
        <taxon>Galliformes</taxon>
        <taxon>Phasianidae</taxon>
        <taxon>Phasianinae</taxon>
        <taxon>Gallus</taxon>
    </lineage>
</organism>
<dbReference type="EMBL" id="AJ719748">
    <property type="protein sequence ID" value="CAG31407.1"/>
    <property type="molecule type" value="mRNA"/>
</dbReference>
<dbReference type="SMR" id="Q09121"/>
<dbReference type="FunCoup" id="Q09121">
    <property type="interactions" value="1506"/>
</dbReference>
<dbReference type="VEuPathDB" id="HostDB:LOC107050352"/>
<dbReference type="InParanoid" id="Q09121"/>
<dbReference type="PhylomeDB" id="Q09121"/>
<dbReference type="Proteomes" id="UP000000539">
    <property type="component" value="Unassembled WGS sequence"/>
</dbReference>
<dbReference type="GO" id="GO:0005789">
    <property type="term" value="C:endoplasmic reticulum membrane"/>
    <property type="evidence" value="ECO:0007669"/>
    <property type="project" value="UniProtKB-SubCell"/>
</dbReference>
<dbReference type="GO" id="GO:0005634">
    <property type="term" value="C:nucleus"/>
    <property type="evidence" value="ECO:0007669"/>
    <property type="project" value="UniProtKB-SubCell"/>
</dbReference>
<dbReference type="GO" id="GO:0043022">
    <property type="term" value="F:ribosome binding"/>
    <property type="evidence" value="ECO:0007669"/>
    <property type="project" value="InterPro"/>
</dbReference>
<dbReference type="GO" id="GO:0003723">
    <property type="term" value="F:RNA binding"/>
    <property type="evidence" value="ECO:0007669"/>
    <property type="project" value="UniProtKB-KW"/>
</dbReference>
<dbReference type="GO" id="GO:0003746">
    <property type="term" value="F:translation elongation factor activity"/>
    <property type="evidence" value="ECO:0000318"/>
    <property type="project" value="GO_Central"/>
</dbReference>
<dbReference type="GO" id="GO:0045901">
    <property type="term" value="P:positive regulation of translational elongation"/>
    <property type="evidence" value="ECO:0007669"/>
    <property type="project" value="InterPro"/>
</dbReference>
<dbReference type="GO" id="GO:0045905">
    <property type="term" value="P:positive regulation of translational termination"/>
    <property type="evidence" value="ECO:0007669"/>
    <property type="project" value="InterPro"/>
</dbReference>
<dbReference type="GO" id="GO:0006414">
    <property type="term" value="P:translational elongation"/>
    <property type="evidence" value="ECO:0000318"/>
    <property type="project" value="GO_Central"/>
</dbReference>
<dbReference type="CDD" id="cd04468">
    <property type="entry name" value="S1_eIF5A"/>
    <property type="match status" value="1"/>
</dbReference>
<dbReference type="FunFam" id="2.30.30.30:FF:000007">
    <property type="entry name" value="Eukaryotic translation initiation factor 5A"/>
    <property type="match status" value="1"/>
</dbReference>
<dbReference type="FunFam" id="2.40.50.140:FF:000034">
    <property type="entry name" value="Eukaryotic translation initiation factor 5A"/>
    <property type="match status" value="1"/>
</dbReference>
<dbReference type="Gene3D" id="2.30.30.30">
    <property type="match status" value="1"/>
</dbReference>
<dbReference type="Gene3D" id="2.40.50.140">
    <property type="entry name" value="Nucleic acid-binding proteins"/>
    <property type="match status" value="1"/>
</dbReference>
<dbReference type="InterPro" id="IPR001884">
    <property type="entry name" value="IF5A-like"/>
</dbReference>
<dbReference type="InterPro" id="IPR048670">
    <property type="entry name" value="IF5A-like_N"/>
</dbReference>
<dbReference type="InterPro" id="IPR012340">
    <property type="entry name" value="NA-bd_OB-fold"/>
</dbReference>
<dbReference type="InterPro" id="IPR014722">
    <property type="entry name" value="Rib_uL2_dom2"/>
</dbReference>
<dbReference type="InterPro" id="IPR019769">
    <property type="entry name" value="Trans_elong_IF5A_hypusine_site"/>
</dbReference>
<dbReference type="InterPro" id="IPR020189">
    <property type="entry name" value="Transl_elong_IF5A_C"/>
</dbReference>
<dbReference type="InterPro" id="IPR008991">
    <property type="entry name" value="Translation_prot_SH3-like_sf"/>
</dbReference>
<dbReference type="NCBIfam" id="TIGR00037">
    <property type="entry name" value="eIF_5A"/>
    <property type="match status" value="1"/>
</dbReference>
<dbReference type="PANTHER" id="PTHR11673">
    <property type="entry name" value="TRANSLATION INITIATION FACTOR 5A FAMILY MEMBER"/>
    <property type="match status" value="1"/>
</dbReference>
<dbReference type="Pfam" id="PF01287">
    <property type="entry name" value="eIF-5a"/>
    <property type="match status" value="1"/>
</dbReference>
<dbReference type="Pfam" id="PF21485">
    <property type="entry name" value="IF5A-like_N"/>
    <property type="match status" value="1"/>
</dbReference>
<dbReference type="PIRSF" id="PIRSF003025">
    <property type="entry name" value="eIF5A"/>
    <property type="match status" value="1"/>
</dbReference>
<dbReference type="SMART" id="SM01376">
    <property type="entry name" value="eIF-5a"/>
    <property type="match status" value="1"/>
</dbReference>
<dbReference type="SUPFAM" id="SSF50249">
    <property type="entry name" value="Nucleic acid-binding proteins"/>
    <property type="match status" value="1"/>
</dbReference>
<dbReference type="SUPFAM" id="SSF50104">
    <property type="entry name" value="Translation proteins SH3-like domain"/>
    <property type="match status" value="1"/>
</dbReference>
<dbReference type="PROSITE" id="PS00302">
    <property type="entry name" value="IF5A_HYPUSINE"/>
    <property type="match status" value="1"/>
</dbReference>
<gene>
    <name type="primary">EIF5A1</name>
    <name type="ORF">RCJMB04_6a12</name>
</gene>
<sequence length="144" mass="15889">MADDLDFETGDAGASATFPMQCSALRKNGFVVLKGRPCKIVEMSTSKTGKHGHAKVHLVGIDIFTGKKYEDICPSTHNMDVPNIKRCDFQLIGIQDGFLSLLQDSGEVREDLRLPEGELGREIEQKYDCGEEIITIHGARFTTS</sequence>
<comment type="function">
    <text evidence="2 3">Translation factor that promotes translation elongation and termination, particularly upon ribosome stalling at specific amino acid sequence contexts (By similarity). Binds between the exit (E) and peptidyl (P) site of the ribosome and promotes rescue of stalled ribosome: specifically required for efficient translation of polyproline-containing peptides as well as other motifs that stall the ribosome. Acts as a ribosome quality control (RQC) cofactor by joining the RQC complex to facilitate peptidyl transfer during CAT tailing step (By similarity). Also involved in actin dynamics and cell cycle progression, mRNA decay and probably in a pathway involved in stress response and maintenance of cell wall integrity (By similarity).</text>
</comment>
<comment type="subunit">
    <text evidence="3 4">Binds to 80S ribosomes. Actively translating ribosomes show mutually exclusive binding of eIF5a (EIF5A or EIF5A2) and EEF2/eEF2 (By similarity). Interacts with DAPL1; interaction takes place at the polypeptide exit tunnel of hibernating ribosomes and prevents translation (By similarity).</text>
</comment>
<comment type="subcellular location">
    <subcellularLocation>
        <location evidence="3">Cytoplasm</location>
    </subcellularLocation>
    <subcellularLocation>
        <location evidence="3">Nucleus</location>
    </subcellularLocation>
    <subcellularLocation>
        <location evidence="3">Endoplasmic reticulum membrane</location>
        <topology evidence="3">Peripheral membrane protein</topology>
        <orientation evidence="3">Cytoplasmic side</orientation>
    </subcellularLocation>
    <text evidence="3">Hypusine modification promotes the nuclear export and cytoplasmic localization and there was a dynamic shift in the localization from predominantly cytoplasmic to primarily nuclear under apoptotic inducing conditions.</text>
</comment>
<comment type="PTM">
    <text evidence="5">Lys-50 undergoes hypusination, a unique post-translational modification that consists in the addition of a butylamino group from spermidine to lysine side chain, leading to the formation of the unusual amino acid hypusine. eIF-5As are the only known proteins to undergo this modification, which is essential for their function.</text>
</comment>
<comment type="PTM">
    <text>The N-terminus is blocked.</text>
</comment>
<comment type="similarity">
    <text evidence="6">Belongs to the eIF-5A family.</text>
</comment>
<comment type="caution">
    <text evidence="6">The C-terminal section of the sequence may be incorrect.</text>
</comment>
<protein>
    <recommendedName>
        <fullName>Eukaryotic translation initiation factor 5A-1</fullName>
        <shortName>eIF-5A-1</shortName>
        <shortName>eIF-5A1</shortName>
    </recommendedName>
    <alternativeName>
        <fullName>Eukaryotic initiation factor 5A isoform 1</fullName>
        <shortName>eIF-5A</shortName>
    </alternativeName>
    <alternativeName>
        <fullName>eIF-4D</fullName>
    </alternativeName>
</protein>
<reference key="1">
    <citation type="journal article" date="2005" name="Genome Biol.">
        <title>Full-length cDNAs from chicken bursal lymphocytes to facilitate gene function analysis.</title>
        <authorList>
            <person name="Caldwell R.B."/>
            <person name="Kierzek A.M."/>
            <person name="Arakawa H."/>
            <person name="Bezzubov Y."/>
            <person name="Zaim J."/>
            <person name="Fiedler P."/>
            <person name="Kutter S."/>
            <person name="Blagodatski A."/>
            <person name="Kostovska D."/>
            <person name="Koter M."/>
            <person name="Plachy J."/>
            <person name="Carninci P."/>
            <person name="Hayashizaki Y."/>
            <person name="Buerstedde J.-M."/>
        </authorList>
    </citation>
    <scope>NUCLEOTIDE SEQUENCE [LARGE SCALE MRNA]</scope>
    <source>
        <strain>CB</strain>
        <tissue>Bursa of Fabricius</tissue>
    </source>
</reference>
<reference key="2">
    <citation type="journal article" date="1992" name="J. Biol. Chem.">
        <title>Two isoforms of eIF-5A in chick embryo. Isolation, activity, and comparison of sequences of the hypusine-containing proteins.</title>
        <authorList>
            <person name="Wolff E.C."/>
            <person name="Kinzy T.G."/>
            <person name="Merrick W.C."/>
            <person name="Park M.H."/>
        </authorList>
    </citation>
    <scope>PROTEIN SEQUENCE OF 21-39 AND 44-121</scope>
    <scope>HYPUSINE AT LYS-50</scope>
    <scope>BLOCKED N-TERMINUS</scope>
    <source>
        <strain>Leghorn</strain>
        <tissue>Embryo</tissue>
    </source>
</reference>
<name>IF5A1_CHICK</name>
<evidence type="ECO:0000250" key="1"/>
<evidence type="ECO:0000250" key="2">
    <source>
        <dbReference type="UniProtKB" id="P23301"/>
    </source>
</evidence>
<evidence type="ECO:0000250" key="3">
    <source>
        <dbReference type="UniProtKB" id="P63241"/>
    </source>
</evidence>
<evidence type="ECO:0000250" key="4">
    <source>
        <dbReference type="UniProtKB" id="Q6NX89"/>
    </source>
</evidence>
<evidence type="ECO:0000269" key="5">
    <source>
    </source>
</evidence>
<evidence type="ECO:0000305" key="6"/>
<feature type="initiator methionine" description="Removed" evidence="1">
    <location>
        <position position="1"/>
    </location>
</feature>
<feature type="chain" id="PRO_0000142455" description="Eukaryotic translation initiation factor 5A-1">
    <location>
        <begin position="2"/>
        <end position="144"/>
    </location>
</feature>
<feature type="modified residue" description="N-acetylalanine" evidence="3">
    <location>
        <position position="2"/>
    </location>
</feature>
<feature type="modified residue" description="Hypusine" evidence="5">
    <location>
        <position position="50"/>
    </location>
</feature>
<feature type="sequence conflict" description="In Ref. 2; AA sequence." evidence="6" ref="2">
    <original>C</original>
    <variation>N</variation>
    <location>
        <position position="87"/>
    </location>
</feature>
<accession>Q09121</accession>
<accession>Q5ZLI6</accession>